<proteinExistence type="evidence at protein level"/>
<gene>
    <name evidence="1 3" type="primary">lspA</name>
    <name type="ordered locus">SAUSA300_1089</name>
</gene>
<organism>
    <name type="scientific">Staphylococcus aureus (strain USA300)</name>
    <dbReference type="NCBI Taxonomy" id="367830"/>
    <lineage>
        <taxon>Bacteria</taxon>
        <taxon>Bacillati</taxon>
        <taxon>Bacillota</taxon>
        <taxon>Bacilli</taxon>
        <taxon>Bacillales</taxon>
        <taxon>Staphylococcaceae</taxon>
        <taxon>Staphylococcus</taxon>
    </lineage>
</organism>
<protein>
    <recommendedName>
        <fullName evidence="1 3">Lipoprotein signal peptidase</fullName>
        <ecNumber evidence="1 2">3.4.23.36</ecNumber>
    </recommendedName>
    <alternativeName>
        <fullName evidence="3">LspMrs</fullName>
    </alternativeName>
    <alternativeName>
        <fullName evidence="1">Prolipoprotein signal peptidase</fullName>
    </alternativeName>
    <alternativeName>
        <fullName evidence="1">Signal peptidase II</fullName>
        <shortName evidence="1">SPase II</shortName>
    </alternativeName>
</protein>
<accession>Q2FHP2</accession>
<sequence length="163" mass="18342">MHKKYFIGTSILIAVFVVIFDQVTKYIIATTMKIGDSFEVIPHFLNITSHRNNGAAWGILSGKMTFFFIITIIILIALVYFFIKDAQYNLFMQVAISLLFAGALGNFIDRILTGEVVDFIDTNIFGYDFPIFNIADSSLTIGVILIIIALLKDTSNKKEKEVK</sequence>
<dbReference type="EC" id="3.4.23.36" evidence="1 2"/>
<dbReference type="EMBL" id="CP000255">
    <property type="protein sequence ID" value="ABD21210.1"/>
    <property type="molecule type" value="Genomic_DNA"/>
</dbReference>
<dbReference type="RefSeq" id="WP_000549207.1">
    <property type="nucleotide sequence ID" value="NZ_CP027476.1"/>
</dbReference>
<dbReference type="PDB" id="6RYO">
    <property type="method" value="X-ray"/>
    <property type="resolution" value="1.92 A"/>
    <property type="chains" value="A=1-163"/>
</dbReference>
<dbReference type="PDB" id="6RYP">
    <property type="method" value="X-ray"/>
    <property type="resolution" value="2.30 A"/>
    <property type="chains" value="A=1-163"/>
</dbReference>
<dbReference type="PDBsum" id="6RYO"/>
<dbReference type="PDBsum" id="6RYP"/>
<dbReference type="SMR" id="Q2FHP2"/>
<dbReference type="KEGG" id="saa:SAUSA300_1089"/>
<dbReference type="HOGENOM" id="CLU_083252_3_0_9"/>
<dbReference type="OMA" id="NRWYFPA"/>
<dbReference type="UniPathway" id="UPA00665"/>
<dbReference type="Proteomes" id="UP000001939">
    <property type="component" value="Chromosome"/>
</dbReference>
<dbReference type="GO" id="GO:0005886">
    <property type="term" value="C:plasma membrane"/>
    <property type="evidence" value="ECO:0007669"/>
    <property type="project" value="UniProtKB-SubCell"/>
</dbReference>
<dbReference type="GO" id="GO:0004190">
    <property type="term" value="F:aspartic-type endopeptidase activity"/>
    <property type="evidence" value="ECO:0007669"/>
    <property type="project" value="UniProtKB-UniRule"/>
</dbReference>
<dbReference type="GO" id="GO:0006508">
    <property type="term" value="P:proteolysis"/>
    <property type="evidence" value="ECO:0007669"/>
    <property type="project" value="UniProtKB-KW"/>
</dbReference>
<dbReference type="HAMAP" id="MF_00161">
    <property type="entry name" value="LspA"/>
    <property type="match status" value="1"/>
</dbReference>
<dbReference type="InterPro" id="IPR001872">
    <property type="entry name" value="Peptidase_A8"/>
</dbReference>
<dbReference type="NCBIfam" id="TIGR00077">
    <property type="entry name" value="lspA"/>
    <property type="match status" value="1"/>
</dbReference>
<dbReference type="PANTHER" id="PTHR33695">
    <property type="entry name" value="LIPOPROTEIN SIGNAL PEPTIDASE"/>
    <property type="match status" value="1"/>
</dbReference>
<dbReference type="PANTHER" id="PTHR33695:SF1">
    <property type="entry name" value="LIPOPROTEIN SIGNAL PEPTIDASE"/>
    <property type="match status" value="1"/>
</dbReference>
<dbReference type="Pfam" id="PF01252">
    <property type="entry name" value="Peptidase_A8"/>
    <property type="match status" value="1"/>
</dbReference>
<dbReference type="PRINTS" id="PR00781">
    <property type="entry name" value="LIPOSIGPTASE"/>
</dbReference>
<dbReference type="PROSITE" id="PS00855">
    <property type="entry name" value="SPASE_II"/>
    <property type="match status" value="1"/>
</dbReference>
<keyword id="KW-0002">3D-structure</keyword>
<keyword id="KW-0064">Aspartyl protease</keyword>
<keyword id="KW-1003">Cell membrane</keyword>
<keyword id="KW-0378">Hydrolase</keyword>
<keyword id="KW-0472">Membrane</keyword>
<keyword id="KW-0645">Protease</keyword>
<keyword id="KW-0812">Transmembrane</keyword>
<keyword id="KW-1133">Transmembrane helix</keyword>
<feature type="chain" id="PRO_0000289433" description="Lipoprotein signal peptidase">
    <location>
        <begin position="1"/>
        <end position="163"/>
    </location>
</feature>
<feature type="topological domain" description="Cytoplasmic" evidence="2 5">
    <location>
        <begin position="1"/>
        <end position="6"/>
    </location>
</feature>
<feature type="transmembrane region" description="Helical" evidence="2 5">
    <location>
        <begin position="7"/>
        <end position="25"/>
    </location>
</feature>
<feature type="topological domain" description="Extracellular" evidence="2 5">
    <location>
        <begin position="26"/>
        <end position="62"/>
    </location>
</feature>
<feature type="transmembrane region" description="Helical" evidence="1 2 5">
    <location>
        <begin position="63"/>
        <end position="83"/>
    </location>
</feature>
<feature type="topological domain" description="Cytoplasmic" evidence="2 5">
    <location>
        <begin position="84"/>
        <end position="89"/>
    </location>
</feature>
<feature type="transmembrane region" description="Helical" evidence="2 5">
    <location>
        <begin position="90"/>
        <end position="112"/>
    </location>
</feature>
<feature type="topological domain" description="Extracellular" evidence="2 5">
    <location>
        <begin position="113"/>
        <end position="133"/>
    </location>
</feature>
<feature type="transmembrane region" description="Helical" evidence="2 5">
    <location>
        <begin position="134"/>
        <end position="151"/>
    </location>
</feature>
<feature type="topological domain" description="Cytoplasmic" evidence="2 5">
    <location>
        <begin position="152"/>
        <end position="163"/>
    </location>
</feature>
<feature type="active site" evidence="1 4">
    <location>
        <position position="118"/>
    </location>
</feature>
<feature type="active site" evidence="1 4">
    <location>
        <position position="136"/>
    </location>
</feature>
<feature type="mutagenesis site" description="Retains 7% of wild-type activity." evidence="2">
    <original>N</original>
    <variation>A</variation>
    <location>
        <position position="52"/>
    </location>
</feature>
<feature type="mutagenesis site" description="Retains 71% of wild-type activity." evidence="2">
    <original>N</original>
    <variation>Q</variation>
    <location>
        <position position="52"/>
    </location>
</feature>
<feature type="mutagenesis site" description="Small increase in activity." evidence="2">
    <original>G</original>
    <variation>A</variation>
    <location>
        <position position="54"/>
    </location>
</feature>
<feature type="mutagenesis site" description="Loss of activity." evidence="2">
    <original>G</original>
    <variation>P</variation>
    <location>
        <position position="54"/>
    </location>
</feature>
<feature type="mutagenesis site" description="Loss of activity." evidence="2">
    <original>R</original>
    <variation>A</variation>
    <location>
        <position position="110"/>
    </location>
</feature>
<feature type="mutagenesis site" description="Retains 50% of wild-type activity." evidence="2">
    <original>R</original>
    <variation>K</variation>
    <location>
        <position position="110"/>
    </location>
</feature>
<feature type="mutagenesis site" description="Loss of activity." evidence="2">
    <original>D</original>
    <variation>N</variation>
    <location>
        <position position="118"/>
    </location>
</feature>
<feature type="mutagenesis site" description="Retains 3% of wild-type activity." evidence="2">
    <original>N</original>
    <variation>A</variation>
    <variation>Q</variation>
    <location>
        <position position="133"/>
    </location>
</feature>
<feature type="mutagenesis site" description="Loss of activity." evidence="2">
    <original>D</original>
    <variation>N</variation>
    <location>
        <position position="136"/>
    </location>
</feature>
<reference key="1">
    <citation type="journal article" date="2006" name="Lancet">
        <title>Complete genome sequence of USA300, an epidemic clone of community-acquired meticillin-resistant Staphylococcus aureus.</title>
        <authorList>
            <person name="Diep B.A."/>
            <person name="Gill S.R."/>
            <person name="Chang R.F."/>
            <person name="Phan T.H."/>
            <person name="Chen J.H."/>
            <person name="Davidson M.G."/>
            <person name="Lin F."/>
            <person name="Lin J."/>
            <person name="Carleton H.A."/>
            <person name="Mongodin E.F."/>
            <person name="Sensabaugh G.F."/>
            <person name="Perdreau-Remington F."/>
        </authorList>
    </citation>
    <scope>NUCLEOTIDE SEQUENCE [LARGE SCALE GENOMIC DNA]</scope>
    <source>
        <strain>USA300</strain>
    </source>
</reference>
<reference evidence="5 6" key="2">
    <citation type="journal article" date="2020" name="Nat. Commun.">
        <title>Structures of lipoprotein signal peptidase II from Staphylococcus aureus complexed with antibiotics globomycin and myxovirescin.</title>
        <authorList>
            <person name="Olatunji S."/>
            <person name="Yu X."/>
            <person name="Bailey J."/>
            <person name="Huang C.Y."/>
            <person name="Zapotoczna M."/>
            <person name="Bowen K."/>
            <person name="Remskar M."/>
            <person name="Mueller R."/>
            <person name="Scanlan E.M."/>
            <person name="Geoghegan J.A."/>
            <person name="Olieric V."/>
            <person name="Caffrey M."/>
        </authorList>
    </citation>
    <scope>X-RAY CRYSTALLOGRAPHY (1.92 ANGSTROMS) IN COMPLEXES WITH GLOBOMYCIN AND MYXOVIRESCIN</scope>
    <scope>FUNCTION</scope>
    <scope>CATALYTIC ACTIVITY</scope>
    <scope>ACTIVITY REGULATION</scope>
    <scope>BIOPHYSICOCHEMICAL PROPERTIES</scope>
    <scope>SUBCELLULAR LOCATION</scope>
    <scope>TOPOLOGY</scope>
    <scope>DISRUPTION PHENOTYPE</scope>
    <scope>BIOTECHNOLOGY</scope>
    <scope>MUTAGENESIS OF ASN-52; GLY-54; ARG-110; ASP-118; ASN-133 AND ASP-136</scope>
    <scope>ACTIVE SITES</scope>
    <source>
        <strain>USA300 / LAC</strain>
    </source>
</reference>
<comment type="function">
    <text evidence="1 2">This protein specifically catalyzes the removal of signal peptides from prolipoproteins.</text>
</comment>
<comment type="catalytic activity">
    <reaction evidence="1 2">
        <text>Release of signal peptides from bacterial membrane prolipoproteins. Hydrolyzes -Xaa-Yaa-Zaa-|-(S,diacylglyceryl)Cys-, in which Xaa is hydrophobic (preferably Leu), and Yaa (Ala or Ser) and Zaa (Gly or Ala) have small, neutral side chains.</text>
        <dbReference type="EC" id="3.4.23.36"/>
    </reaction>
</comment>
<comment type="activity regulation">
    <text evidence="2">Inhibited by the antibiotics globomycin and myxovirescin. They act by blocking the catalytic dyad.</text>
</comment>
<comment type="biophysicochemical properties">
    <kinetics>
        <KM evidence="2">47 uM for P.aeruginosa inhibitor of cysteine peptidase</KM>
        <Vmax evidence="2">2.5 nmol/min/mg enzyme with P.aeruginosa inhibitor of cysteine peptidase as substrate</Vmax>
    </kinetics>
</comment>
<comment type="pathway">
    <text evidence="1">Protein modification; lipoprotein biosynthesis (signal peptide cleavage).</text>
</comment>
<comment type="subcellular location">
    <subcellularLocation>
        <location evidence="1 2">Cell membrane</location>
        <topology evidence="1 2">Multi-pass membrane protein</topology>
    </subcellularLocation>
</comment>
<comment type="disruption phenotype">
    <text evidence="2">Mutant in strain LAC grows similarly to wild-type in rich laboratory media, but has a reduced ability to survive in whole human blood.</text>
</comment>
<comment type="biotechnology">
    <text evidence="2">LspA is an ideal target for anti-infective agents as it is required for the survival of MRSA under physiologically relevant conditions in human blood.</text>
</comment>
<comment type="similarity">
    <text evidence="1">Belongs to the peptidase A8 family.</text>
</comment>
<evidence type="ECO:0000255" key="1">
    <source>
        <dbReference type="HAMAP-Rule" id="MF_00161"/>
    </source>
</evidence>
<evidence type="ECO:0000269" key="2">
    <source>
    </source>
</evidence>
<evidence type="ECO:0000303" key="3">
    <source>
    </source>
</evidence>
<evidence type="ECO:0000305" key="4">
    <source>
    </source>
</evidence>
<evidence type="ECO:0007744" key="5">
    <source>
        <dbReference type="PDB" id="6RYO"/>
    </source>
</evidence>
<evidence type="ECO:0007744" key="6">
    <source>
        <dbReference type="PDB" id="6RYP"/>
    </source>
</evidence>
<name>LSPA_STAA3</name>